<gene>
    <name evidence="1" type="primary">hldE</name>
    <name type="synonym">waaE</name>
    <name type="ordered locus">Hac_1221</name>
</gene>
<organism>
    <name type="scientific">Helicobacter acinonychis (strain Sheeba)</name>
    <dbReference type="NCBI Taxonomy" id="382638"/>
    <lineage>
        <taxon>Bacteria</taxon>
        <taxon>Pseudomonadati</taxon>
        <taxon>Campylobacterota</taxon>
        <taxon>Epsilonproteobacteria</taxon>
        <taxon>Campylobacterales</taxon>
        <taxon>Helicobacteraceae</taxon>
        <taxon>Helicobacter</taxon>
    </lineage>
</organism>
<keyword id="KW-0067">ATP-binding</keyword>
<keyword id="KW-0119">Carbohydrate metabolism</keyword>
<keyword id="KW-0418">Kinase</keyword>
<keyword id="KW-0511">Multifunctional enzyme</keyword>
<keyword id="KW-0547">Nucleotide-binding</keyword>
<keyword id="KW-0548">Nucleotidyltransferase</keyword>
<keyword id="KW-0808">Transferase</keyword>
<feature type="chain" id="PRO_0000291676" description="Bifunctional protein HldE">
    <location>
        <begin position="1"/>
        <end position="463"/>
    </location>
</feature>
<feature type="region of interest" description="Ribokinase">
    <location>
        <begin position="1"/>
        <end position="315"/>
    </location>
</feature>
<feature type="region of interest" description="Cytidylyltransferase">
    <location>
        <begin position="334"/>
        <end position="463"/>
    </location>
</feature>
<feature type="active site" evidence="1">
    <location>
        <position position="260"/>
    </location>
</feature>
<feature type="binding site" evidence="1">
    <location>
        <begin position="191"/>
        <end position="194"/>
    </location>
    <ligand>
        <name>ATP</name>
        <dbReference type="ChEBI" id="CHEBI:30616"/>
    </ligand>
</feature>
<evidence type="ECO:0000255" key="1">
    <source>
        <dbReference type="HAMAP-Rule" id="MF_01603"/>
    </source>
</evidence>
<reference key="1">
    <citation type="journal article" date="2006" name="PLoS Genet.">
        <title>Who ate whom? Adaptive Helicobacter genomic changes that accompanied a host jump from early humans to large felines.</title>
        <authorList>
            <person name="Eppinger M."/>
            <person name="Baar C."/>
            <person name="Linz B."/>
            <person name="Raddatz G."/>
            <person name="Lanz C."/>
            <person name="Keller H."/>
            <person name="Morelli G."/>
            <person name="Gressmann H."/>
            <person name="Achtman M."/>
            <person name="Schuster S.C."/>
        </authorList>
    </citation>
    <scope>NUCLEOTIDE SEQUENCE [LARGE SCALE GENOMIC DNA]</scope>
    <source>
        <strain>Sheeba</strain>
    </source>
</reference>
<comment type="function">
    <text evidence="1">Catalyzes the phosphorylation of D-glycero-D-manno-heptose 7-phosphate at the C-1 position to selectively form D-glycero-beta-D-manno-heptose-1,7-bisphosphate.</text>
</comment>
<comment type="function">
    <text evidence="1">Catalyzes the ADP transfer from ATP to D-glycero-beta-D-manno-heptose 1-phosphate, yielding ADP-D-glycero-beta-D-manno-heptose.</text>
</comment>
<comment type="catalytic activity">
    <reaction evidence="1">
        <text>D-glycero-beta-D-manno-heptose 7-phosphate + ATP = D-glycero-beta-D-manno-heptose 1,7-bisphosphate + ADP + H(+)</text>
        <dbReference type="Rhea" id="RHEA:27473"/>
        <dbReference type="ChEBI" id="CHEBI:15378"/>
        <dbReference type="ChEBI" id="CHEBI:30616"/>
        <dbReference type="ChEBI" id="CHEBI:60204"/>
        <dbReference type="ChEBI" id="CHEBI:60208"/>
        <dbReference type="ChEBI" id="CHEBI:456216"/>
        <dbReference type="EC" id="2.7.1.167"/>
    </reaction>
</comment>
<comment type="catalytic activity">
    <reaction evidence="1">
        <text>D-glycero-beta-D-manno-heptose 1-phosphate + ATP + H(+) = ADP-D-glycero-beta-D-manno-heptose + diphosphate</text>
        <dbReference type="Rhea" id="RHEA:27465"/>
        <dbReference type="ChEBI" id="CHEBI:15378"/>
        <dbReference type="ChEBI" id="CHEBI:30616"/>
        <dbReference type="ChEBI" id="CHEBI:33019"/>
        <dbReference type="ChEBI" id="CHEBI:59967"/>
        <dbReference type="ChEBI" id="CHEBI:61593"/>
        <dbReference type="EC" id="2.7.7.70"/>
    </reaction>
</comment>
<comment type="pathway">
    <text evidence="1">Nucleotide-sugar biosynthesis; ADP-L-glycero-beta-D-manno-heptose biosynthesis; ADP-L-glycero-beta-D-manno-heptose from D-glycero-beta-D-manno-heptose 7-phosphate: step 1/4.</text>
</comment>
<comment type="pathway">
    <text evidence="1">Nucleotide-sugar biosynthesis; ADP-L-glycero-beta-D-manno-heptose biosynthesis; ADP-L-glycero-beta-D-manno-heptose from D-glycero-beta-D-manno-heptose 7-phosphate: step 3/4.</text>
</comment>
<comment type="subunit">
    <text evidence="1">Homodimer.</text>
</comment>
<comment type="similarity">
    <text evidence="1">In the N-terminal section; belongs to the carbohydrate kinase PfkB family.</text>
</comment>
<comment type="similarity">
    <text evidence="1">In the C-terminal section; belongs to the cytidylyltransferase family.</text>
</comment>
<protein>
    <recommendedName>
        <fullName evidence="1">Bifunctional protein HldE</fullName>
    </recommendedName>
    <domain>
        <recommendedName>
            <fullName evidence="1">D-beta-D-heptose 7-phosphate kinase</fullName>
            <ecNumber evidence="1">2.7.1.167</ecNumber>
        </recommendedName>
        <alternativeName>
            <fullName evidence="1">D-beta-D-heptose 7-phosphotransferase</fullName>
        </alternativeName>
        <alternativeName>
            <fullName evidence="1">D-glycero-beta-D-manno-heptose-7-phosphate kinase</fullName>
        </alternativeName>
    </domain>
    <domain>
        <recommendedName>
            <fullName evidence="1">D-beta-D-heptose 1-phosphate adenylyltransferase</fullName>
            <ecNumber evidence="1">2.7.7.70</ecNumber>
        </recommendedName>
        <alternativeName>
            <fullName evidence="1">D-glycero-beta-D-manno-heptose 1-phosphate adenylyltransferase</fullName>
        </alternativeName>
    </domain>
</protein>
<proteinExistence type="inferred from homology"/>
<dbReference type="EC" id="2.7.1.167" evidence="1"/>
<dbReference type="EC" id="2.7.7.70" evidence="1"/>
<dbReference type="EMBL" id="AM260522">
    <property type="protein sequence ID" value="CAJ99975.1"/>
    <property type="molecule type" value="Genomic_DNA"/>
</dbReference>
<dbReference type="RefSeq" id="WP_011578082.1">
    <property type="nucleotide sequence ID" value="NC_008229.1"/>
</dbReference>
<dbReference type="SMR" id="Q17WK1"/>
<dbReference type="STRING" id="382638.Hac_1221"/>
<dbReference type="GeneID" id="31758567"/>
<dbReference type="KEGG" id="hac:Hac_1221"/>
<dbReference type="eggNOG" id="COG0615">
    <property type="taxonomic scope" value="Bacteria"/>
</dbReference>
<dbReference type="eggNOG" id="COG2870">
    <property type="taxonomic scope" value="Bacteria"/>
</dbReference>
<dbReference type="HOGENOM" id="CLU_021150_2_1_7"/>
<dbReference type="OrthoDB" id="9802794at2"/>
<dbReference type="BioCyc" id="HACI382638:HAC_RS05275-MONOMER"/>
<dbReference type="UniPathway" id="UPA00356">
    <property type="reaction ID" value="UER00437"/>
</dbReference>
<dbReference type="UniPathway" id="UPA00356">
    <property type="reaction ID" value="UER00439"/>
</dbReference>
<dbReference type="Proteomes" id="UP000000775">
    <property type="component" value="Chromosome"/>
</dbReference>
<dbReference type="GO" id="GO:0005829">
    <property type="term" value="C:cytosol"/>
    <property type="evidence" value="ECO:0007669"/>
    <property type="project" value="TreeGrafter"/>
</dbReference>
<dbReference type="GO" id="GO:0005524">
    <property type="term" value="F:ATP binding"/>
    <property type="evidence" value="ECO:0007669"/>
    <property type="project" value="UniProtKB-UniRule"/>
</dbReference>
<dbReference type="GO" id="GO:0033785">
    <property type="term" value="F:heptose 7-phosphate kinase activity"/>
    <property type="evidence" value="ECO:0007669"/>
    <property type="project" value="UniProtKB-UniRule"/>
</dbReference>
<dbReference type="GO" id="GO:0033786">
    <property type="term" value="F:heptose-1-phosphate adenylyltransferase activity"/>
    <property type="evidence" value="ECO:0007669"/>
    <property type="project" value="UniProtKB-UniRule"/>
</dbReference>
<dbReference type="GO" id="GO:0016773">
    <property type="term" value="F:phosphotransferase activity, alcohol group as acceptor"/>
    <property type="evidence" value="ECO:0007669"/>
    <property type="project" value="InterPro"/>
</dbReference>
<dbReference type="GO" id="GO:0097171">
    <property type="term" value="P:ADP-L-glycero-beta-D-manno-heptose biosynthetic process"/>
    <property type="evidence" value="ECO:0007669"/>
    <property type="project" value="UniProtKB-UniPathway"/>
</dbReference>
<dbReference type="CDD" id="cd01172">
    <property type="entry name" value="RfaE_like"/>
    <property type="match status" value="1"/>
</dbReference>
<dbReference type="Gene3D" id="3.40.1190.20">
    <property type="match status" value="1"/>
</dbReference>
<dbReference type="Gene3D" id="3.40.50.620">
    <property type="entry name" value="HUPs"/>
    <property type="match status" value="1"/>
</dbReference>
<dbReference type="HAMAP" id="MF_01603">
    <property type="entry name" value="HldE"/>
    <property type="match status" value="1"/>
</dbReference>
<dbReference type="InterPro" id="IPR023030">
    <property type="entry name" value="Bifunc_HldE"/>
</dbReference>
<dbReference type="InterPro" id="IPR002173">
    <property type="entry name" value="Carboh/pur_kinase_PfkB_CS"/>
</dbReference>
<dbReference type="InterPro" id="IPR004821">
    <property type="entry name" value="Cyt_trans-like"/>
</dbReference>
<dbReference type="InterPro" id="IPR011611">
    <property type="entry name" value="PfkB_dom"/>
</dbReference>
<dbReference type="InterPro" id="IPR011913">
    <property type="entry name" value="RfaE_dom_I"/>
</dbReference>
<dbReference type="InterPro" id="IPR011914">
    <property type="entry name" value="RfaE_dom_II"/>
</dbReference>
<dbReference type="InterPro" id="IPR029056">
    <property type="entry name" value="Ribokinase-like"/>
</dbReference>
<dbReference type="InterPro" id="IPR014729">
    <property type="entry name" value="Rossmann-like_a/b/a_fold"/>
</dbReference>
<dbReference type="NCBIfam" id="TIGR00125">
    <property type="entry name" value="cyt_tran_rel"/>
    <property type="match status" value="1"/>
</dbReference>
<dbReference type="NCBIfam" id="TIGR02198">
    <property type="entry name" value="rfaE_dom_I"/>
    <property type="match status" value="1"/>
</dbReference>
<dbReference type="NCBIfam" id="TIGR02199">
    <property type="entry name" value="rfaE_dom_II"/>
    <property type="match status" value="1"/>
</dbReference>
<dbReference type="PANTHER" id="PTHR46969">
    <property type="entry name" value="BIFUNCTIONAL PROTEIN HLDE"/>
    <property type="match status" value="1"/>
</dbReference>
<dbReference type="PANTHER" id="PTHR46969:SF1">
    <property type="entry name" value="BIFUNCTIONAL PROTEIN HLDE"/>
    <property type="match status" value="1"/>
</dbReference>
<dbReference type="Pfam" id="PF01467">
    <property type="entry name" value="CTP_transf_like"/>
    <property type="match status" value="1"/>
</dbReference>
<dbReference type="Pfam" id="PF00294">
    <property type="entry name" value="PfkB"/>
    <property type="match status" value="1"/>
</dbReference>
<dbReference type="SUPFAM" id="SSF52374">
    <property type="entry name" value="Nucleotidylyl transferase"/>
    <property type="match status" value="1"/>
</dbReference>
<dbReference type="SUPFAM" id="SSF53613">
    <property type="entry name" value="Ribokinase-like"/>
    <property type="match status" value="1"/>
</dbReference>
<dbReference type="PROSITE" id="PS00583">
    <property type="entry name" value="PFKB_KINASES_1"/>
    <property type="match status" value="1"/>
</dbReference>
<sequence length="463" mass="51012">MRKILVIGDLIADYYLWGKSERLSPEAPVPILEVKKESKSLGGAANVANNLISLGAQVFLCGVVGDDLEGKHFINALKIREVDTSGVLIDKTRCTTLKTRIIVQNQQIVRVDKEIKDPLNADLRKNLLDFVAEKIQEMDGIILSDYNKGVLDFKITQTIIALANKHYKLILCDPKGKDYSKYSHASLITPNRFELEQALHLKLDGDANLLKALQILQETYHIAMPLVTLSEQGIAFLEKNELINCPTIAKEVYDVTGAGDTVIASLTLSLLESKNLKEACEFANAAAAVVVGKMGSALASLEEIALILNQTHPKILSLEKLLNILEYNKQKVVFTNGCFDILHKGHASYLQKAKALGDILIVGLNSDASIKRLKGDKRPIVGEKDRAFLLASLSCVDYIVVFEEDTPIGLIQALKPDILVKGADYLDKEVIGSEFAKETCLMAFEEGYSTSAIIEKIKRAYND</sequence>
<accession>Q17WK1</accession>
<name>HLDE_HELAH</name>